<organism>
    <name type="scientific">Bacillus subtilis (strain 168)</name>
    <dbReference type="NCBI Taxonomy" id="224308"/>
    <lineage>
        <taxon>Bacteria</taxon>
        <taxon>Bacillati</taxon>
        <taxon>Bacillota</taxon>
        <taxon>Bacilli</taxon>
        <taxon>Bacillales</taxon>
        <taxon>Bacillaceae</taxon>
        <taxon>Bacillus</taxon>
    </lineage>
</organism>
<feature type="chain" id="PRO_0000387968" description="Putative amidohydrolase YhaA">
    <location>
        <begin position="1"/>
        <end position="396"/>
    </location>
</feature>
<feature type="active site" evidence="1">
    <location>
        <position position="85"/>
    </location>
</feature>
<feature type="active site" description="Proton acceptor" evidence="1">
    <location>
        <position position="143"/>
    </location>
</feature>
<feature type="binding site" evidence="1">
    <location>
        <position position="144"/>
    </location>
    <ligand>
        <name>Zn(2+)</name>
        <dbReference type="ChEBI" id="CHEBI:29105"/>
        <label>2</label>
    </ligand>
</feature>
<feature type="binding site" evidence="1">
    <location>
        <position position="182"/>
    </location>
    <ligand>
        <name>Zn(2+)</name>
        <dbReference type="ChEBI" id="CHEBI:29105"/>
        <label>1</label>
    </ligand>
</feature>
<feature type="binding site" evidence="1">
    <location>
        <position position="368"/>
    </location>
    <ligand>
        <name>Zn(2+)</name>
        <dbReference type="ChEBI" id="CHEBI:29105"/>
        <label>2</label>
    </ligand>
</feature>
<proteinExistence type="inferred from homology"/>
<sequence length="396" mass="43220">MSISTLQKEINKQLDGCFEEMVEIRRHFHMYPELSFQEEKTAAFIASYYESLGVPIRTNVGGRGVLANIEGSEPGPTVALRADFDALPIQDEKDVPYASKVPGVMHACGHDGHTAALLAVAKVLHQNRHELKGTFVMIHQHAEEYYPGGAKPMIDDGCLENTDVIFGTHLWATEPLGTILCRPGAVMAAADRFTIKVFGKGGHGAHPHDTKDAVLIGSQIVSSLQHIVSRKVNPIQSAVISTGSFIADNPFNVIADQAVLIGTARSFDENVRDILEKEIEAVVKGICSMHGASYEYTYEQGYPAVVNHPAETNHLVSTAKNTEGVQQVIDGEPQMGGEDFAYYLQNVKGTFFFTGAAPEQPERVYSHHHPKFDINEKAMLTAAKVLAGAAITYHQL</sequence>
<name>YHAA_BACSU</name>
<accession>O07598</accession>
<accession>O07512</accession>
<evidence type="ECO:0000250" key="1"/>
<evidence type="ECO:0000305" key="2"/>
<gene>
    <name type="primary">yhaA</name>
    <name type="ordered locus">BSU10070</name>
</gene>
<dbReference type="EC" id="3.5.1.-"/>
<dbReference type="EMBL" id="AL009126">
    <property type="protein sequence ID" value="CAB12847.2"/>
    <property type="molecule type" value="Genomic_DNA"/>
</dbReference>
<dbReference type="SMR" id="O07598"/>
<dbReference type="FunCoup" id="O07598">
    <property type="interactions" value="292"/>
</dbReference>
<dbReference type="STRING" id="224308.BSU10070"/>
<dbReference type="PaxDb" id="224308-BSU10070"/>
<dbReference type="EnsemblBacteria" id="CAB12847">
    <property type="protein sequence ID" value="CAB12847"/>
    <property type="gene ID" value="BSU_10070"/>
</dbReference>
<dbReference type="GeneID" id="936299"/>
<dbReference type="KEGG" id="bsu:BSU10070"/>
<dbReference type="PATRIC" id="fig|224308.179.peg.1083"/>
<dbReference type="eggNOG" id="COG1473">
    <property type="taxonomic scope" value="Bacteria"/>
</dbReference>
<dbReference type="InParanoid" id="O07598"/>
<dbReference type="OrthoDB" id="9776731at2"/>
<dbReference type="PhylomeDB" id="O07598"/>
<dbReference type="BioCyc" id="BSUB:BSU10070-MONOMER"/>
<dbReference type="BioCyc" id="MetaCyc:BSU10070-MONOMER"/>
<dbReference type="Proteomes" id="UP000001570">
    <property type="component" value="Chromosome"/>
</dbReference>
<dbReference type="GO" id="GO:0016787">
    <property type="term" value="F:hydrolase activity"/>
    <property type="evidence" value="ECO:0000318"/>
    <property type="project" value="GO_Central"/>
</dbReference>
<dbReference type="GO" id="GO:0046872">
    <property type="term" value="F:metal ion binding"/>
    <property type="evidence" value="ECO:0007669"/>
    <property type="project" value="UniProtKB-KW"/>
</dbReference>
<dbReference type="CDD" id="cd08021">
    <property type="entry name" value="M20_Acy1_YhaA-like"/>
    <property type="match status" value="1"/>
</dbReference>
<dbReference type="FunFam" id="3.30.70.360:FF:000001">
    <property type="entry name" value="N-acetyldiaminopimelate deacetylase"/>
    <property type="match status" value="1"/>
</dbReference>
<dbReference type="Gene3D" id="3.30.70.360">
    <property type="match status" value="1"/>
</dbReference>
<dbReference type="Gene3D" id="3.40.630.10">
    <property type="entry name" value="Zn peptidases"/>
    <property type="match status" value="1"/>
</dbReference>
<dbReference type="InterPro" id="IPR017439">
    <property type="entry name" value="Amidohydrolase"/>
</dbReference>
<dbReference type="InterPro" id="IPR036264">
    <property type="entry name" value="Bact_exopeptidase_dim_dom"/>
</dbReference>
<dbReference type="InterPro" id="IPR002933">
    <property type="entry name" value="Peptidase_M20"/>
</dbReference>
<dbReference type="InterPro" id="IPR011650">
    <property type="entry name" value="Peptidase_M20_dimer"/>
</dbReference>
<dbReference type="NCBIfam" id="TIGR01891">
    <property type="entry name" value="amidohydrolases"/>
    <property type="match status" value="1"/>
</dbReference>
<dbReference type="PANTHER" id="PTHR11014:SF63">
    <property type="entry name" value="METALLOPEPTIDASE, PUTATIVE (AFU_ORTHOLOGUE AFUA_6G09600)-RELATED"/>
    <property type="match status" value="1"/>
</dbReference>
<dbReference type="PANTHER" id="PTHR11014">
    <property type="entry name" value="PEPTIDASE M20 FAMILY MEMBER"/>
    <property type="match status" value="1"/>
</dbReference>
<dbReference type="Pfam" id="PF07687">
    <property type="entry name" value="M20_dimer"/>
    <property type="match status" value="1"/>
</dbReference>
<dbReference type="Pfam" id="PF01546">
    <property type="entry name" value="Peptidase_M20"/>
    <property type="match status" value="1"/>
</dbReference>
<dbReference type="PIRSF" id="PIRSF005962">
    <property type="entry name" value="Pept_M20D_amidohydro"/>
    <property type="match status" value="1"/>
</dbReference>
<dbReference type="SUPFAM" id="SSF55031">
    <property type="entry name" value="Bacterial exopeptidase dimerisation domain"/>
    <property type="match status" value="1"/>
</dbReference>
<dbReference type="SUPFAM" id="SSF53187">
    <property type="entry name" value="Zn-dependent exopeptidases"/>
    <property type="match status" value="1"/>
</dbReference>
<comment type="cofactor">
    <cofactor evidence="1">
        <name>Zn(2+)</name>
        <dbReference type="ChEBI" id="CHEBI:29105"/>
    </cofactor>
    <cofactor evidence="1">
        <name>Co(2+)</name>
        <dbReference type="ChEBI" id="CHEBI:48828"/>
    </cofactor>
    <text evidence="1">Binds 2 Zn(2+) or Co(2+) ions per subunit.</text>
</comment>
<comment type="similarity">
    <text evidence="2">Belongs to the peptidase M20A family.</text>
</comment>
<reference key="1">
    <citation type="journal article" date="1997" name="Nature">
        <title>The complete genome sequence of the Gram-positive bacterium Bacillus subtilis.</title>
        <authorList>
            <person name="Kunst F."/>
            <person name="Ogasawara N."/>
            <person name="Moszer I."/>
            <person name="Albertini A.M."/>
            <person name="Alloni G."/>
            <person name="Azevedo V."/>
            <person name="Bertero M.G."/>
            <person name="Bessieres P."/>
            <person name="Bolotin A."/>
            <person name="Borchert S."/>
            <person name="Borriss R."/>
            <person name="Boursier L."/>
            <person name="Brans A."/>
            <person name="Braun M."/>
            <person name="Brignell S.C."/>
            <person name="Bron S."/>
            <person name="Brouillet S."/>
            <person name="Bruschi C.V."/>
            <person name="Caldwell B."/>
            <person name="Capuano V."/>
            <person name="Carter N.M."/>
            <person name="Choi S.-K."/>
            <person name="Codani J.-J."/>
            <person name="Connerton I.F."/>
            <person name="Cummings N.J."/>
            <person name="Daniel R.A."/>
            <person name="Denizot F."/>
            <person name="Devine K.M."/>
            <person name="Duesterhoeft A."/>
            <person name="Ehrlich S.D."/>
            <person name="Emmerson P.T."/>
            <person name="Entian K.-D."/>
            <person name="Errington J."/>
            <person name="Fabret C."/>
            <person name="Ferrari E."/>
            <person name="Foulger D."/>
            <person name="Fritz C."/>
            <person name="Fujita M."/>
            <person name="Fujita Y."/>
            <person name="Fuma S."/>
            <person name="Galizzi A."/>
            <person name="Galleron N."/>
            <person name="Ghim S.-Y."/>
            <person name="Glaser P."/>
            <person name="Goffeau A."/>
            <person name="Golightly E.J."/>
            <person name="Grandi G."/>
            <person name="Guiseppi G."/>
            <person name="Guy B.J."/>
            <person name="Haga K."/>
            <person name="Haiech J."/>
            <person name="Harwood C.R."/>
            <person name="Henaut A."/>
            <person name="Hilbert H."/>
            <person name="Holsappel S."/>
            <person name="Hosono S."/>
            <person name="Hullo M.-F."/>
            <person name="Itaya M."/>
            <person name="Jones L.-M."/>
            <person name="Joris B."/>
            <person name="Karamata D."/>
            <person name="Kasahara Y."/>
            <person name="Klaerr-Blanchard M."/>
            <person name="Klein C."/>
            <person name="Kobayashi Y."/>
            <person name="Koetter P."/>
            <person name="Koningstein G."/>
            <person name="Krogh S."/>
            <person name="Kumano M."/>
            <person name="Kurita K."/>
            <person name="Lapidus A."/>
            <person name="Lardinois S."/>
            <person name="Lauber J."/>
            <person name="Lazarevic V."/>
            <person name="Lee S.-M."/>
            <person name="Levine A."/>
            <person name="Liu H."/>
            <person name="Masuda S."/>
            <person name="Mauel C."/>
            <person name="Medigue C."/>
            <person name="Medina N."/>
            <person name="Mellado R.P."/>
            <person name="Mizuno M."/>
            <person name="Moestl D."/>
            <person name="Nakai S."/>
            <person name="Noback M."/>
            <person name="Noone D."/>
            <person name="O'Reilly M."/>
            <person name="Ogawa K."/>
            <person name="Ogiwara A."/>
            <person name="Oudega B."/>
            <person name="Park S.-H."/>
            <person name="Parro V."/>
            <person name="Pohl T.M."/>
            <person name="Portetelle D."/>
            <person name="Porwollik S."/>
            <person name="Prescott A.M."/>
            <person name="Presecan E."/>
            <person name="Pujic P."/>
            <person name="Purnelle B."/>
            <person name="Rapoport G."/>
            <person name="Rey M."/>
            <person name="Reynolds S."/>
            <person name="Rieger M."/>
            <person name="Rivolta C."/>
            <person name="Rocha E."/>
            <person name="Roche B."/>
            <person name="Rose M."/>
            <person name="Sadaie Y."/>
            <person name="Sato T."/>
            <person name="Scanlan E."/>
            <person name="Schleich S."/>
            <person name="Schroeter R."/>
            <person name="Scoffone F."/>
            <person name="Sekiguchi J."/>
            <person name="Sekowska A."/>
            <person name="Seror S.J."/>
            <person name="Serror P."/>
            <person name="Shin B.-S."/>
            <person name="Soldo B."/>
            <person name="Sorokin A."/>
            <person name="Tacconi E."/>
            <person name="Takagi T."/>
            <person name="Takahashi H."/>
            <person name="Takemaru K."/>
            <person name="Takeuchi M."/>
            <person name="Tamakoshi A."/>
            <person name="Tanaka T."/>
            <person name="Terpstra P."/>
            <person name="Tognoni A."/>
            <person name="Tosato V."/>
            <person name="Uchiyama S."/>
            <person name="Vandenbol M."/>
            <person name="Vannier F."/>
            <person name="Vassarotti A."/>
            <person name="Viari A."/>
            <person name="Wambutt R."/>
            <person name="Wedler E."/>
            <person name="Wedler H."/>
            <person name="Weitzenegger T."/>
            <person name="Winters P."/>
            <person name="Wipat A."/>
            <person name="Yamamoto H."/>
            <person name="Yamane K."/>
            <person name="Yasumoto K."/>
            <person name="Yata K."/>
            <person name="Yoshida K."/>
            <person name="Yoshikawa H.-F."/>
            <person name="Zumstein E."/>
            <person name="Yoshikawa H."/>
            <person name="Danchin A."/>
        </authorList>
    </citation>
    <scope>NUCLEOTIDE SEQUENCE [LARGE SCALE GENOMIC DNA]</scope>
    <source>
        <strain>168</strain>
    </source>
</reference>
<reference key="2">
    <citation type="journal article" date="2009" name="Microbiology">
        <title>From a consortium sequence to a unified sequence: the Bacillus subtilis 168 reference genome a decade later.</title>
        <authorList>
            <person name="Barbe V."/>
            <person name="Cruveiller S."/>
            <person name="Kunst F."/>
            <person name="Lenoble P."/>
            <person name="Meurice G."/>
            <person name="Sekowska A."/>
            <person name="Vallenet D."/>
            <person name="Wang T."/>
            <person name="Moszer I."/>
            <person name="Medigue C."/>
            <person name="Danchin A."/>
        </authorList>
    </citation>
    <scope>SEQUENCE REVISION TO 89-92</scope>
</reference>
<protein>
    <recommendedName>
        <fullName>Putative amidohydrolase YhaA</fullName>
        <ecNumber>3.5.1.-</ecNumber>
    </recommendedName>
</protein>
<keyword id="KW-0170">Cobalt</keyword>
<keyword id="KW-0378">Hydrolase</keyword>
<keyword id="KW-0479">Metal-binding</keyword>
<keyword id="KW-1185">Reference proteome</keyword>
<keyword id="KW-0862">Zinc</keyword>